<sequence length="158" mass="17185">MSTAPTAPTVAELEEQERRLVFRRFTNDDAWALGSLLVELAREREAPVAIDIHRAGQQLFHAALPGSAPDNDAWIARKRRVVERYGSASYLVGSRFRAKGTTFEESSRLDPDAYAAHGGSFPVTVAGVGVVGAVTVSGLPQVEDHRLVVEALERFIGE</sequence>
<protein>
    <recommendedName>
        <fullName evidence="1">UPF0303 protein SCO2848</fullName>
    </recommendedName>
</protein>
<comment type="similarity">
    <text evidence="1">Belongs to the UPF0303 family.</text>
</comment>
<reference key="1">
    <citation type="journal article" date="2002" name="Nature">
        <title>Complete genome sequence of the model actinomycete Streptomyces coelicolor A3(2).</title>
        <authorList>
            <person name="Bentley S.D."/>
            <person name="Chater K.F."/>
            <person name="Cerdeno-Tarraga A.-M."/>
            <person name="Challis G.L."/>
            <person name="Thomson N.R."/>
            <person name="James K.D."/>
            <person name="Harris D.E."/>
            <person name="Quail M.A."/>
            <person name="Kieser H."/>
            <person name="Harper D."/>
            <person name="Bateman A."/>
            <person name="Brown S."/>
            <person name="Chandra G."/>
            <person name="Chen C.W."/>
            <person name="Collins M."/>
            <person name="Cronin A."/>
            <person name="Fraser A."/>
            <person name="Goble A."/>
            <person name="Hidalgo J."/>
            <person name="Hornsby T."/>
            <person name="Howarth S."/>
            <person name="Huang C.-H."/>
            <person name="Kieser T."/>
            <person name="Larke L."/>
            <person name="Murphy L.D."/>
            <person name="Oliver K."/>
            <person name="O'Neil S."/>
            <person name="Rabbinowitsch E."/>
            <person name="Rajandream M.A."/>
            <person name="Rutherford K.M."/>
            <person name="Rutter S."/>
            <person name="Seeger K."/>
            <person name="Saunders D."/>
            <person name="Sharp S."/>
            <person name="Squares R."/>
            <person name="Squares S."/>
            <person name="Taylor K."/>
            <person name="Warren T."/>
            <person name="Wietzorrek A."/>
            <person name="Woodward J.R."/>
            <person name="Barrell B.G."/>
            <person name="Parkhill J."/>
            <person name="Hopwood D.A."/>
        </authorList>
    </citation>
    <scope>NUCLEOTIDE SEQUENCE [LARGE SCALE GENOMIC DNA]</scope>
    <source>
        <strain>ATCC BAA-471 / A3(2) / M145</strain>
    </source>
</reference>
<evidence type="ECO:0000255" key="1">
    <source>
        <dbReference type="HAMAP-Rule" id="MF_00761"/>
    </source>
</evidence>
<accession>Q9RDA3</accession>
<feature type="chain" id="PRO_0000208922" description="UPF0303 protein SCO2848">
    <location>
        <begin position="1"/>
        <end position="158"/>
    </location>
</feature>
<proteinExistence type="inferred from homology"/>
<organism>
    <name type="scientific">Streptomyces coelicolor (strain ATCC BAA-471 / A3(2) / M145)</name>
    <dbReference type="NCBI Taxonomy" id="100226"/>
    <lineage>
        <taxon>Bacteria</taxon>
        <taxon>Bacillati</taxon>
        <taxon>Actinomycetota</taxon>
        <taxon>Actinomycetes</taxon>
        <taxon>Kitasatosporales</taxon>
        <taxon>Streptomycetaceae</taxon>
        <taxon>Streptomyces</taxon>
        <taxon>Streptomyces albidoflavus group</taxon>
    </lineage>
</organism>
<dbReference type="EMBL" id="AL939114">
    <property type="protein sequence ID" value="CAB65578.1"/>
    <property type="molecule type" value="Genomic_DNA"/>
</dbReference>
<dbReference type="RefSeq" id="NP_627077.1">
    <property type="nucleotide sequence ID" value="NC_003888.3"/>
</dbReference>
<dbReference type="RefSeq" id="WP_011028617.1">
    <property type="nucleotide sequence ID" value="NZ_VNID01000010.1"/>
</dbReference>
<dbReference type="SMR" id="Q9RDA3"/>
<dbReference type="STRING" id="100226.gene:17760459"/>
<dbReference type="PaxDb" id="100226-SCO2848"/>
<dbReference type="KEGG" id="sco:SCO2848"/>
<dbReference type="PATRIC" id="fig|100226.15.peg.2907"/>
<dbReference type="eggNOG" id="COG4702">
    <property type="taxonomic scope" value="Bacteria"/>
</dbReference>
<dbReference type="HOGENOM" id="CLU_101036_2_1_11"/>
<dbReference type="InParanoid" id="Q9RDA3"/>
<dbReference type="OrthoDB" id="9815315at2"/>
<dbReference type="PhylomeDB" id="Q9RDA3"/>
<dbReference type="Proteomes" id="UP000001973">
    <property type="component" value="Chromosome"/>
</dbReference>
<dbReference type="FunFam" id="3.30.450.150:FF:000006">
    <property type="entry name" value="UPF0303 protein EF915_34475"/>
    <property type="match status" value="1"/>
</dbReference>
<dbReference type="Gene3D" id="3.30.450.150">
    <property type="entry name" value="Haem-degrading domain"/>
    <property type="match status" value="1"/>
</dbReference>
<dbReference type="HAMAP" id="MF_00761">
    <property type="entry name" value="UPF0303"/>
    <property type="match status" value="1"/>
</dbReference>
<dbReference type="InterPro" id="IPR005624">
    <property type="entry name" value="PduO/GlcC-like"/>
</dbReference>
<dbReference type="InterPro" id="IPR038084">
    <property type="entry name" value="PduO/GlcC-like_sf"/>
</dbReference>
<dbReference type="InterPro" id="IPR010371">
    <property type="entry name" value="YBR137W-like"/>
</dbReference>
<dbReference type="NCBIfam" id="NF002696">
    <property type="entry name" value="PRK02487.1-5"/>
    <property type="match status" value="1"/>
</dbReference>
<dbReference type="PANTHER" id="PTHR28255">
    <property type="match status" value="1"/>
</dbReference>
<dbReference type="PANTHER" id="PTHR28255:SF1">
    <property type="entry name" value="UPF0303 PROTEIN YBR137W"/>
    <property type="match status" value="1"/>
</dbReference>
<dbReference type="Pfam" id="PF03928">
    <property type="entry name" value="HbpS-like"/>
    <property type="match status" value="1"/>
</dbReference>
<dbReference type="PIRSF" id="PIRSF008757">
    <property type="entry name" value="UCP008757"/>
    <property type="match status" value="1"/>
</dbReference>
<dbReference type="SUPFAM" id="SSF143744">
    <property type="entry name" value="GlcG-like"/>
    <property type="match status" value="1"/>
</dbReference>
<keyword id="KW-1185">Reference proteome</keyword>
<gene>
    <name type="ordered locus">SCO2848</name>
    <name type="ORF">SCE20.22</name>
</gene>
<name>Y2848_STRCO</name>